<accession>A6VPE4</accession>
<dbReference type="EC" id="1.17.1.8" evidence="1"/>
<dbReference type="EMBL" id="CP000746">
    <property type="protein sequence ID" value="ABR74841.1"/>
    <property type="molecule type" value="Genomic_DNA"/>
</dbReference>
<dbReference type="RefSeq" id="WP_012073218.1">
    <property type="nucleotide sequence ID" value="NC_009655.1"/>
</dbReference>
<dbReference type="SMR" id="A6VPE4"/>
<dbReference type="STRING" id="339671.Asuc_1483"/>
<dbReference type="KEGG" id="asu:Asuc_1483"/>
<dbReference type="eggNOG" id="COG0289">
    <property type="taxonomic scope" value="Bacteria"/>
</dbReference>
<dbReference type="HOGENOM" id="CLU_047479_2_1_6"/>
<dbReference type="OrthoDB" id="9790352at2"/>
<dbReference type="UniPathway" id="UPA00034">
    <property type="reaction ID" value="UER00018"/>
</dbReference>
<dbReference type="Proteomes" id="UP000001114">
    <property type="component" value="Chromosome"/>
</dbReference>
<dbReference type="GO" id="GO:0005829">
    <property type="term" value="C:cytosol"/>
    <property type="evidence" value="ECO:0007669"/>
    <property type="project" value="TreeGrafter"/>
</dbReference>
<dbReference type="GO" id="GO:0008839">
    <property type="term" value="F:4-hydroxy-tetrahydrodipicolinate reductase"/>
    <property type="evidence" value="ECO:0007669"/>
    <property type="project" value="UniProtKB-EC"/>
</dbReference>
<dbReference type="GO" id="GO:0051287">
    <property type="term" value="F:NAD binding"/>
    <property type="evidence" value="ECO:0007669"/>
    <property type="project" value="UniProtKB-UniRule"/>
</dbReference>
<dbReference type="GO" id="GO:0050661">
    <property type="term" value="F:NADP binding"/>
    <property type="evidence" value="ECO:0007669"/>
    <property type="project" value="UniProtKB-UniRule"/>
</dbReference>
<dbReference type="GO" id="GO:0016726">
    <property type="term" value="F:oxidoreductase activity, acting on CH or CH2 groups, NAD or NADP as acceptor"/>
    <property type="evidence" value="ECO:0007669"/>
    <property type="project" value="UniProtKB-UniRule"/>
</dbReference>
<dbReference type="GO" id="GO:0019877">
    <property type="term" value="P:diaminopimelate biosynthetic process"/>
    <property type="evidence" value="ECO:0007669"/>
    <property type="project" value="UniProtKB-UniRule"/>
</dbReference>
<dbReference type="GO" id="GO:0009089">
    <property type="term" value="P:lysine biosynthetic process via diaminopimelate"/>
    <property type="evidence" value="ECO:0007669"/>
    <property type="project" value="UniProtKB-UniRule"/>
</dbReference>
<dbReference type="CDD" id="cd02274">
    <property type="entry name" value="DHDPR_N"/>
    <property type="match status" value="1"/>
</dbReference>
<dbReference type="FunFam" id="3.30.360.10:FF:000004">
    <property type="entry name" value="4-hydroxy-tetrahydrodipicolinate reductase"/>
    <property type="match status" value="1"/>
</dbReference>
<dbReference type="FunFam" id="3.40.50.720:FF:000048">
    <property type="entry name" value="4-hydroxy-tetrahydrodipicolinate reductase"/>
    <property type="match status" value="1"/>
</dbReference>
<dbReference type="Gene3D" id="3.30.360.10">
    <property type="entry name" value="Dihydrodipicolinate Reductase, domain 2"/>
    <property type="match status" value="1"/>
</dbReference>
<dbReference type="Gene3D" id="3.40.50.720">
    <property type="entry name" value="NAD(P)-binding Rossmann-like Domain"/>
    <property type="match status" value="1"/>
</dbReference>
<dbReference type="HAMAP" id="MF_00102">
    <property type="entry name" value="DapB"/>
    <property type="match status" value="1"/>
</dbReference>
<dbReference type="InterPro" id="IPR022663">
    <property type="entry name" value="DapB_C"/>
</dbReference>
<dbReference type="InterPro" id="IPR000846">
    <property type="entry name" value="DapB_N"/>
</dbReference>
<dbReference type="InterPro" id="IPR022664">
    <property type="entry name" value="DapB_N_CS"/>
</dbReference>
<dbReference type="InterPro" id="IPR023940">
    <property type="entry name" value="DHDPR_bac"/>
</dbReference>
<dbReference type="InterPro" id="IPR036291">
    <property type="entry name" value="NAD(P)-bd_dom_sf"/>
</dbReference>
<dbReference type="NCBIfam" id="TIGR00036">
    <property type="entry name" value="dapB"/>
    <property type="match status" value="1"/>
</dbReference>
<dbReference type="PANTHER" id="PTHR20836:SF0">
    <property type="entry name" value="4-HYDROXY-TETRAHYDRODIPICOLINATE REDUCTASE 1, CHLOROPLASTIC-RELATED"/>
    <property type="match status" value="1"/>
</dbReference>
<dbReference type="PANTHER" id="PTHR20836">
    <property type="entry name" value="DIHYDRODIPICOLINATE REDUCTASE"/>
    <property type="match status" value="1"/>
</dbReference>
<dbReference type="Pfam" id="PF05173">
    <property type="entry name" value="DapB_C"/>
    <property type="match status" value="1"/>
</dbReference>
<dbReference type="Pfam" id="PF01113">
    <property type="entry name" value="DapB_N"/>
    <property type="match status" value="1"/>
</dbReference>
<dbReference type="PIRSF" id="PIRSF000161">
    <property type="entry name" value="DHPR"/>
    <property type="match status" value="1"/>
</dbReference>
<dbReference type="SUPFAM" id="SSF55347">
    <property type="entry name" value="Glyceraldehyde-3-phosphate dehydrogenase-like, C-terminal domain"/>
    <property type="match status" value="1"/>
</dbReference>
<dbReference type="SUPFAM" id="SSF51735">
    <property type="entry name" value="NAD(P)-binding Rossmann-fold domains"/>
    <property type="match status" value="1"/>
</dbReference>
<dbReference type="PROSITE" id="PS01298">
    <property type="entry name" value="DAPB"/>
    <property type="match status" value="1"/>
</dbReference>
<organism>
    <name type="scientific">Actinobacillus succinogenes (strain ATCC 55618 / DSM 22257 / CCUG 43843 / 130Z)</name>
    <dbReference type="NCBI Taxonomy" id="339671"/>
    <lineage>
        <taxon>Bacteria</taxon>
        <taxon>Pseudomonadati</taxon>
        <taxon>Pseudomonadota</taxon>
        <taxon>Gammaproteobacteria</taxon>
        <taxon>Pasteurellales</taxon>
        <taxon>Pasteurellaceae</taxon>
        <taxon>Actinobacillus</taxon>
    </lineage>
</organism>
<reference key="1">
    <citation type="journal article" date="2010" name="BMC Genomics">
        <title>A genomic perspective on the potential of Actinobacillus succinogenes for industrial succinate production.</title>
        <authorList>
            <person name="McKinlay J.B."/>
            <person name="Laivenieks M."/>
            <person name="Schindler B.D."/>
            <person name="McKinlay A.A."/>
            <person name="Siddaramappa S."/>
            <person name="Challacombe J.F."/>
            <person name="Lowry S.R."/>
            <person name="Clum A."/>
            <person name="Lapidus A.L."/>
            <person name="Burkhart K.B."/>
            <person name="Harkins V."/>
            <person name="Vieille C."/>
        </authorList>
    </citation>
    <scope>NUCLEOTIDE SEQUENCE [LARGE SCALE GENOMIC DNA]</scope>
    <source>
        <strain>ATCC 55618 / DSM 22257 / CCUG 43843 / 130Z</strain>
    </source>
</reference>
<name>DAPB_ACTSZ</name>
<proteinExistence type="inferred from homology"/>
<feature type="chain" id="PRO_1000071301" description="4-hydroxy-tetrahydrodipicolinate reductase">
    <location>
        <begin position="1"/>
        <end position="270"/>
    </location>
</feature>
<feature type="active site" description="Proton donor/acceptor" evidence="1">
    <location>
        <position position="156"/>
    </location>
</feature>
<feature type="active site" description="Proton donor" evidence="1">
    <location>
        <position position="160"/>
    </location>
</feature>
<feature type="binding site" evidence="1">
    <location>
        <begin position="9"/>
        <end position="14"/>
    </location>
    <ligand>
        <name>NAD(+)</name>
        <dbReference type="ChEBI" id="CHEBI:57540"/>
    </ligand>
</feature>
<feature type="binding site" evidence="1">
    <location>
        <position position="35"/>
    </location>
    <ligand>
        <name>NAD(+)</name>
        <dbReference type="ChEBI" id="CHEBI:57540"/>
    </ligand>
</feature>
<feature type="binding site" evidence="1">
    <location>
        <position position="36"/>
    </location>
    <ligand>
        <name>NADP(+)</name>
        <dbReference type="ChEBI" id="CHEBI:58349"/>
    </ligand>
</feature>
<feature type="binding site" evidence="1">
    <location>
        <begin position="99"/>
        <end position="101"/>
    </location>
    <ligand>
        <name>NAD(+)</name>
        <dbReference type="ChEBI" id="CHEBI:57540"/>
    </ligand>
</feature>
<feature type="binding site" evidence="1">
    <location>
        <begin position="123"/>
        <end position="126"/>
    </location>
    <ligand>
        <name>NAD(+)</name>
        <dbReference type="ChEBI" id="CHEBI:57540"/>
    </ligand>
</feature>
<feature type="binding site" evidence="1">
    <location>
        <position position="157"/>
    </location>
    <ligand>
        <name>(S)-2,3,4,5-tetrahydrodipicolinate</name>
        <dbReference type="ChEBI" id="CHEBI:16845"/>
    </ligand>
</feature>
<feature type="binding site" evidence="1">
    <location>
        <begin position="166"/>
        <end position="167"/>
    </location>
    <ligand>
        <name>(S)-2,3,4,5-tetrahydrodipicolinate</name>
        <dbReference type="ChEBI" id="CHEBI:16845"/>
    </ligand>
</feature>
<protein>
    <recommendedName>
        <fullName evidence="1">4-hydroxy-tetrahydrodipicolinate reductase</fullName>
        <shortName evidence="1">HTPA reductase</shortName>
        <ecNumber evidence="1">1.17.1.8</ecNumber>
    </recommendedName>
</protein>
<sequence length="270" mass="28757">MTLRIGVVGAGGRMGRQLIQAIHAAEGVELSAAFERKGSSLIGSDAGELAGIGHIGVTVEESLTDRADNFDVLIDFTRPEGSLEHLACCAAKGKNVILGTTGFDDAGKAAIKAAAEKIGIVFASNYSVGVNLVFKLLEKAAKVMGDYCDIEIIEAHHRHKVDAPSGTALSMGEHIAKTLGRDLKTHGVFCREGITGERKRDEIGFSTIRAADVVGEHTVWFADIGERVEIAHKASSRMTFANGAVRAAKWIADKKQGLFDMTDVLDLNNL</sequence>
<keyword id="KW-0028">Amino-acid biosynthesis</keyword>
<keyword id="KW-0963">Cytoplasm</keyword>
<keyword id="KW-0220">Diaminopimelate biosynthesis</keyword>
<keyword id="KW-0457">Lysine biosynthesis</keyword>
<keyword id="KW-0520">NAD</keyword>
<keyword id="KW-0521">NADP</keyword>
<keyword id="KW-0560">Oxidoreductase</keyword>
<keyword id="KW-1185">Reference proteome</keyword>
<gene>
    <name evidence="1" type="primary">dapB</name>
    <name type="ordered locus">Asuc_1483</name>
</gene>
<comment type="function">
    <text evidence="1">Catalyzes the conversion of 4-hydroxy-tetrahydrodipicolinate (HTPA) to tetrahydrodipicolinate.</text>
</comment>
<comment type="catalytic activity">
    <reaction evidence="1">
        <text>(S)-2,3,4,5-tetrahydrodipicolinate + NAD(+) + H2O = (2S,4S)-4-hydroxy-2,3,4,5-tetrahydrodipicolinate + NADH + H(+)</text>
        <dbReference type="Rhea" id="RHEA:35323"/>
        <dbReference type="ChEBI" id="CHEBI:15377"/>
        <dbReference type="ChEBI" id="CHEBI:15378"/>
        <dbReference type="ChEBI" id="CHEBI:16845"/>
        <dbReference type="ChEBI" id="CHEBI:57540"/>
        <dbReference type="ChEBI" id="CHEBI:57945"/>
        <dbReference type="ChEBI" id="CHEBI:67139"/>
        <dbReference type="EC" id="1.17.1.8"/>
    </reaction>
</comment>
<comment type="catalytic activity">
    <reaction evidence="1">
        <text>(S)-2,3,4,5-tetrahydrodipicolinate + NADP(+) + H2O = (2S,4S)-4-hydroxy-2,3,4,5-tetrahydrodipicolinate + NADPH + H(+)</text>
        <dbReference type="Rhea" id="RHEA:35331"/>
        <dbReference type="ChEBI" id="CHEBI:15377"/>
        <dbReference type="ChEBI" id="CHEBI:15378"/>
        <dbReference type="ChEBI" id="CHEBI:16845"/>
        <dbReference type="ChEBI" id="CHEBI:57783"/>
        <dbReference type="ChEBI" id="CHEBI:58349"/>
        <dbReference type="ChEBI" id="CHEBI:67139"/>
        <dbReference type="EC" id="1.17.1.8"/>
    </reaction>
</comment>
<comment type="pathway">
    <text evidence="1">Amino-acid biosynthesis; L-lysine biosynthesis via DAP pathway; (S)-tetrahydrodipicolinate from L-aspartate: step 4/4.</text>
</comment>
<comment type="subcellular location">
    <subcellularLocation>
        <location evidence="1">Cytoplasm</location>
    </subcellularLocation>
</comment>
<comment type="similarity">
    <text evidence="1">Belongs to the DapB family.</text>
</comment>
<comment type="caution">
    <text evidence="2">Was originally thought to be a dihydrodipicolinate reductase (DHDPR), catalyzing the conversion of dihydrodipicolinate to tetrahydrodipicolinate. However, it was shown in E.coli that the substrate of the enzymatic reaction is not dihydrodipicolinate (DHDP) but in fact (2S,4S)-4-hydroxy-2,3,4,5-tetrahydrodipicolinic acid (HTPA), the product released by the DapA-catalyzed reaction.</text>
</comment>
<evidence type="ECO:0000255" key="1">
    <source>
        <dbReference type="HAMAP-Rule" id="MF_00102"/>
    </source>
</evidence>
<evidence type="ECO:0000305" key="2"/>